<protein>
    <recommendedName>
        <fullName evidence="1">Exodeoxyribonuclease 7 large subunit</fullName>
        <ecNumber evidence="1">3.1.11.6</ecNumber>
    </recommendedName>
    <alternativeName>
        <fullName evidence="1">Exodeoxyribonuclease VII large subunit</fullName>
        <shortName evidence="1">Exonuclease VII large subunit</shortName>
    </alternativeName>
</protein>
<organism>
    <name type="scientific">Listeria monocytogenes serotype 4b (strain F2365)</name>
    <dbReference type="NCBI Taxonomy" id="265669"/>
    <lineage>
        <taxon>Bacteria</taxon>
        <taxon>Bacillati</taxon>
        <taxon>Bacillota</taxon>
        <taxon>Bacilli</taxon>
        <taxon>Bacillales</taxon>
        <taxon>Listeriaceae</taxon>
        <taxon>Listeria</taxon>
    </lineage>
</organism>
<evidence type="ECO:0000255" key="1">
    <source>
        <dbReference type="HAMAP-Rule" id="MF_00378"/>
    </source>
</evidence>
<dbReference type="EC" id="3.1.11.6" evidence="1"/>
<dbReference type="EMBL" id="AE017262">
    <property type="protein sequence ID" value="AAT04153.1"/>
    <property type="molecule type" value="Genomic_DNA"/>
</dbReference>
<dbReference type="RefSeq" id="WP_003727476.1">
    <property type="nucleotide sequence ID" value="NC_002973.6"/>
</dbReference>
<dbReference type="SMR" id="Q71ZW1"/>
<dbReference type="KEGG" id="lmf:LMOf2365_1378"/>
<dbReference type="HOGENOM" id="CLU_023625_3_1_9"/>
<dbReference type="GO" id="GO:0005737">
    <property type="term" value="C:cytoplasm"/>
    <property type="evidence" value="ECO:0007669"/>
    <property type="project" value="UniProtKB-SubCell"/>
</dbReference>
<dbReference type="GO" id="GO:0009318">
    <property type="term" value="C:exodeoxyribonuclease VII complex"/>
    <property type="evidence" value="ECO:0007669"/>
    <property type="project" value="InterPro"/>
</dbReference>
<dbReference type="GO" id="GO:0008855">
    <property type="term" value="F:exodeoxyribonuclease VII activity"/>
    <property type="evidence" value="ECO:0007669"/>
    <property type="project" value="UniProtKB-UniRule"/>
</dbReference>
<dbReference type="GO" id="GO:0003676">
    <property type="term" value="F:nucleic acid binding"/>
    <property type="evidence" value="ECO:0007669"/>
    <property type="project" value="InterPro"/>
</dbReference>
<dbReference type="GO" id="GO:0006308">
    <property type="term" value="P:DNA catabolic process"/>
    <property type="evidence" value="ECO:0007669"/>
    <property type="project" value="UniProtKB-UniRule"/>
</dbReference>
<dbReference type="CDD" id="cd04489">
    <property type="entry name" value="ExoVII_LU_OBF"/>
    <property type="match status" value="1"/>
</dbReference>
<dbReference type="HAMAP" id="MF_00378">
    <property type="entry name" value="Exonuc_7_L"/>
    <property type="match status" value="1"/>
</dbReference>
<dbReference type="InterPro" id="IPR003753">
    <property type="entry name" value="Exonuc_VII_L"/>
</dbReference>
<dbReference type="InterPro" id="IPR020579">
    <property type="entry name" value="Exonuc_VII_lsu_C"/>
</dbReference>
<dbReference type="InterPro" id="IPR025824">
    <property type="entry name" value="OB-fold_nuc-bd_dom"/>
</dbReference>
<dbReference type="NCBIfam" id="TIGR00237">
    <property type="entry name" value="xseA"/>
    <property type="match status" value="1"/>
</dbReference>
<dbReference type="PANTHER" id="PTHR30008">
    <property type="entry name" value="EXODEOXYRIBONUCLEASE 7 LARGE SUBUNIT"/>
    <property type="match status" value="1"/>
</dbReference>
<dbReference type="PANTHER" id="PTHR30008:SF0">
    <property type="entry name" value="EXODEOXYRIBONUCLEASE 7 LARGE SUBUNIT"/>
    <property type="match status" value="1"/>
</dbReference>
<dbReference type="Pfam" id="PF02601">
    <property type="entry name" value="Exonuc_VII_L"/>
    <property type="match status" value="1"/>
</dbReference>
<dbReference type="Pfam" id="PF13742">
    <property type="entry name" value="tRNA_anti_2"/>
    <property type="match status" value="1"/>
</dbReference>
<accession>Q71ZW1</accession>
<sequence length="450" mass="51291">MEQDKYLTVAAITKYIEKKFEVDPYMKQVFVRGEISNLKQPASGHLYFTVKDEFAMLRSVMFHKAVQKIGFVPEDGMNVLITGRIGVFTKAGRYQFYAEHMEPDGVGALYIQLEQLKSQLEKEGLFAETHKKVLPSFPSKVAVVTSKTGAAVRDILTTIHRRMPSVEVIVYPTIVQGEKAAQKIVENIGKINQRNDIDVMIIGRGGGSLEELWAFNEEPVVRAVYDSDVPVISAVGHETDFALSDFSADVRAATPTAAAELAVPDYRDLEERLAERKYRLLAVTRQALERKERSLEQLKQHLILNGPKHQLEQQMERTDYFSERLNNAFSKQIFVKQTVFDRLNDRLHYYHPNKEIELQKEQMALRLQALEKAMKQLLKDKQQSFFRQIDALEHLSPLSLLKRGFGVTYKENMLVKSVQELEVGDNIQVKMQGGQIEALITAKEEDISGN</sequence>
<gene>
    <name evidence="1" type="primary">xseA</name>
    <name type="ordered locus">LMOf2365_1378</name>
</gene>
<proteinExistence type="inferred from homology"/>
<feature type="chain" id="PRO_0000197857" description="Exodeoxyribonuclease 7 large subunit">
    <location>
        <begin position="1"/>
        <end position="450"/>
    </location>
</feature>
<comment type="function">
    <text evidence="1">Bidirectionally degrades single-stranded DNA into large acid-insoluble oligonucleotides, which are then degraded further into small acid-soluble oligonucleotides.</text>
</comment>
<comment type="catalytic activity">
    <reaction evidence="1">
        <text>Exonucleolytic cleavage in either 5'- to 3'- or 3'- to 5'-direction to yield nucleoside 5'-phosphates.</text>
        <dbReference type="EC" id="3.1.11.6"/>
    </reaction>
</comment>
<comment type="subunit">
    <text evidence="1">Heterooligomer composed of large and small subunits.</text>
</comment>
<comment type="subcellular location">
    <subcellularLocation>
        <location evidence="1">Cytoplasm</location>
    </subcellularLocation>
</comment>
<comment type="similarity">
    <text evidence="1">Belongs to the XseA family.</text>
</comment>
<keyword id="KW-0963">Cytoplasm</keyword>
<keyword id="KW-0269">Exonuclease</keyword>
<keyword id="KW-0378">Hydrolase</keyword>
<keyword id="KW-0540">Nuclease</keyword>
<reference key="1">
    <citation type="journal article" date="2004" name="Nucleic Acids Res.">
        <title>Whole genome comparisons of serotype 4b and 1/2a strains of the food-borne pathogen Listeria monocytogenes reveal new insights into the core genome components of this species.</title>
        <authorList>
            <person name="Nelson K.E."/>
            <person name="Fouts D.E."/>
            <person name="Mongodin E.F."/>
            <person name="Ravel J."/>
            <person name="DeBoy R.T."/>
            <person name="Kolonay J.F."/>
            <person name="Rasko D.A."/>
            <person name="Angiuoli S.V."/>
            <person name="Gill S.R."/>
            <person name="Paulsen I.T."/>
            <person name="Peterson J.D."/>
            <person name="White O."/>
            <person name="Nelson W.C."/>
            <person name="Nierman W.C."/>
            <person name="Beanan M.J."/>
            <person name="Brinkac L.M."/>
            <person name="Daugherty S.C."/>
            <person name="Dodson R.J."/>
            <person name="Durkin A.S."/>
            <person name="Madupu R."/>
            <person name="Haft D.H."/>
            <person name="Selengut J."/>
            <person name="Van Aken S.E."/>
            <person name="Khouri H.M."/>
            <person name="Fedorova N."/>
            <person name="Forberger H.A."/>
            <person name="Tran B."/>
            <person name="Kathariou S."/>
            <person name="Wonderling L.D."/>
            <person name="Uhlich G.A."/>
            <person name="Bayles D.O."/>
            <person name="Luchansky J.B."/>
            <person name="Fraser C.M."/>
        </authorList>
    </citation>
    <scope>NUCLEOTIDE SEQUENCE [LARGE SCALE GENOMIC DNA]</scope>
    <source>
        <strain>F2365</strain>
    </source>
</reference>
<name>EX7L_LISMF</name>